<evidence type="ECO:0000255" key="1">
    <source>
        <dbReference type="HAMAP-Rule" id="MF_00094"/>
    </source>
</evidence>
<name>RF2_STRPG</name>
<gene>
    <name evidence="1" type="primary">prfB</name>
    <name type="ordered locus">SpyM51333</name>
</gene>
<dbReference type="EMBL" id="AM295007">
    <property type="protein sequence ID" value="CAM30661.1"/>
    <property type="molecule type" value="Genomic_DNA"/>
</dbReference>
<dbReference type="RefSeq" id="WP_011889043.1">
    <property type="nucleotide sequence ID" value="NC_009332.1"/>
</dbReference>
<dbReference type="SMR" id="A2RFN2"/>
<dbReference type="KEGG" id="spf:SpyM51333"/>
<dbReference type="HOGENOM" id="CLU_221244_1_0_9"/>
<dbReference type="GO" id="GO:0005737">
    <property type="term" value="C:cytoplasm"/>
    <property type="evidence" value="ECO:0007669"/>
    <property type="project" value="UniProtKB-SubCell"/>
</dbReference>
<dbReference type="GO" id="GO:0016149">
    <property type="term" value="F:translation release factor activity, codon specific"/>
    <property type="evidence" value="ECO:0007669"/>
    <property type="project" value="UniProtKB-UniRule"/>
</dbReference>
<dbReference type="Gene3D" id="3.30.160.20">
    <property type="match status" value="1"/>
</dbReference>
<dbReference type="Gene3D" id="3.30.70.1660">
    <property type="match status" value="1"/>
</dbReference>
<dbReference type="Gene3D" id="1.20.58.410">
    <property type="entry name" value="Release factor"/>
    <property type="match status" value="1"/>
</dbReference>
<dbReference type="HAMAP" id="MF_00094">
    <property type="entry name" value="Rel_fac_2"/>
    <property type="match status" value="1"/>
</dbReference>
<dbReference type="InterPro" id="IPR005139">
    <property type="entry name" value="PCRF"/>
</dbReference>
<dbReference type="InterPro" id="IPR000352">
    <property type="entry name" value="Pep_chain_release_fac_I"/>
</dbReference>
<dbReference type="InterPro" id="IPR045853">
    <property type="entry name" value="Pep_chain_release_fac_I_sf"/>
</dbReference>
<dbReference type="InterPro" id="IPR004374">
    <property type="entry name" value="PrfB"/>
</dbReference>
<dbReference type="NCBIfam" id="TIGR00020">
    <property type="entry name" value="prfB"/>
    <property type="match status" value="1"/>
</dbReference>
<dbReference type="PANTHER" id="PTHR43116:SF3">
    <property type="entry name" value="CLASS I PEPTIDE CHAIN RELEASE FACTOR"/>
    <property type="match status" value="1"/>
</dbReference>
<dbReference type="PANTHER" id="PTHR43116">
    <property type="entry name" value="PEPTIDE CHAIN RELEASE FACTOR 2"/>
    <property type="match status" value="1"/>
</dbReference>
<dbReference type="Pfam" id="PF03462">
    <property type="entry name" value="PCRF"/>
    <property type="match status" value="1"/>
</dbReference>
<dbReference type="Pfam" id="PF00472">
    <property type="entry name" value="RF-1"/>
    <property type="match status" value="1"/>
</dbReference>
<dbReference type="SMART" id="SM00937">
    <property type="entry name" value="PCRF"/>
    <property type="match status" value="1"/>
</dbReference>
<dbReference type="SUPFAM" id="SSF75620">
    <property type="entry name" value="Release factor"/>
    <property type="match status" value="1"/>
</dbReference>
<dbReference type="PROSITE" id="PS00745">
    <property type="entry name" value="RF_PROK_I"/>
    <property type="match status" value="1"/>
</dbReference>
<reference key="1">
    <citation type="journal article" date="2007" name="J. Bacteriol.">
        <title>Complete genome of acute rheumatic fever-associated serotype M5 Streptococcus pyogenes strain Manfredo.</title>
        <authorList>
            <person name="Holden M.T.G."/>
            <person name="Scott A."/>
            <person name="Cherevach I."/>
            <person name="Chillingworth T."/>
            <person name="Churcher C."/>
            <person name="Cronin A."/>
            <person name="Dowd L."/>
            <person name="Feltwell T."/>
            <person name="Hamlin N."/>
            <person name="Holroyd S."/>
            <person name="Jagels K."/>
            <person name="Moule S."/>
            <person name="Mungall K."/>
            <person name="Quail M.A."/>
            <person name="Price C."/>
            <person name="Rabbinowitsch E."/>
            <person name="Sharp S."/>
            <person name="Skelton J."/>
            <person name="Whitehead S."/>
            <person name="Barrell B.G."/>
            <person name="Kehoe M."/>
            <person name="Parkhill J."/>
        </authorList>
    </citation>
    <scope>NUCLEOTIDE SEQUENCE [LARGE SCALE GENOMIC DNA]</scope>
    <source>
        <strain>Manfredo</strain>
    </source>
</reference>
<comment type="function">
    <text evidence="1">Peptide chain release factor 2 directs the termination of translation in response to the peptide chain termination codons UGA and UAA.</text>
</comment>
<comment type="subcellular location">
    <subcellularLocation>
        <location evidence="1">Cytoplasm</location>
    </subcellularLocation>
</comment>
<comment type="PTM">
    <text evidence="1">Methylated by PrmC. Methylation increases the termination efficiency of RF2.</text>
</comment>
<comment type="similarity">
    <text evidence="1">Belongs to the prokaryotic/mitochondrial release factor family.</text>
</comment>
<feature type="chain" id="PRO_1000005014" description="Peptide chain release factor 2">
    <location>
        <begin position="1"/>
        <end position="365"/>
    </location>
</feature>
<feature type="modified residue" description="N5-methylglutamine" evidence="1">
    <location>
        <position position="249"/>
    </location>
</feature>
<keyword id="KW-0963">Cytoplasm</keyword>
<keyword id="KW-0488">Methylation</keyword>
<keyword id="KW-0648">Protein biosynthesis</keyword>
<protein>
    <recommendedName>
        <fullName evidence="1">Peptide chain release factor 2</fullName>
        <shortName evidence="1">RF-2</shortName>
    </recommendedName>
</protein>
<proteinExistence type="inferred from homology"/>
<sequence>MEVAEIRQKIVENKEKLTSFRRSLDLDRLEEEIALLENHMTEPDFWNDNIAAQKTSQELNELKGKYDTFHNMQELSDETELLLEMLDEDDSLKEELEENLMQLDKIMGAYEMTLLLSEPYDHNNAILEIHPGSGGTEAQDWGDLLLRMYTRFGNANGFKVEVLDYQAGDEAGIKSVTLSFEGPNAYGLLKSEMGVHRLVRISPFDSAKRRHTSFASVEVMPELDNTIEVEVRDDDIKMDTFRSGGAGGQNVNKVSTGVRLTHIPTGIVVSSTVDRTQYGNRDRAMKMLQAKLYQLEQEKKAQEVDALKGDKKEITWGSQIRSYVFTPYTMVKDHRTNFELAQVDKVMDGEINGFIDAYLKWRIED</sequence>
<organism>
    <name type="scientific">Streptococcus pyogenes serotype M5 (strain Manfredo)</name>
    <dbReference type="NCBI Taxonomy" id="160491"/>
    <lineage>
        <taxon>Bacteria</taxon>
        <taxon>Bacillati</taxon>
        <taxon>Bacillota</taxon>
        <taxon>Bacilli</taxon>
        <taxon>Lactobacillales</taxon>
        <taxon>Streptococcaceae</taxon>
        <taxon>Streptococcus</taxon>
    </lineage>
</organism>
<accession>A2RFN2</accession>